<feature type="chain" id="PRO_0000271831" description="Protein nucleotidyltransferase YdiU">
    <location>
        <begin position="1"/>
        <end position="518"/>
    </location>
</feature>
<feature type="active site" description="Proton acceptor" evidence="1">
    <location>
        <position position="270"/>
    </location>
</feature>
<feature type="binding site" evidence="1">
    <location>
        <position position="99"/>
    </location>
    <ligand>
        <name>ATP</name>
        <dbReference type="ChEBI" id="CHEBI:30616"/>
    </ligand>
</feature>
<feature type="binding site" evidence="1">
    <location>
        <position position="101"/>
    </location>
    <ligand>
        <name>ATP</name>
        <dbReference type="ChEBI" id="CHEBI:30616"/>
    </ligand>
</feature>
<feature type="binding site" evidence="1">
    <location>
        <position position="102"/>
    </location>
    <ligand>
        <name>ATP</name>
        <dbReference type="ChEBI" id="CHEBI:30616"/>
    </ligand>
</feature>
<feature type="binding site" evidence="1">
    <location>
        <position position="122"/>
    </location>
    <ligand>
        <name>ATP</name>
        <dbReference type="ChEBI" id="CHEBI:30616"/>
    </ligand>
</feature>
<feature type="binding site" evidence="1">
    <location>
        <position position="134"/>
    </location>
    <ligand>
        <name>ATP</name>
        <dbReference type="ChEBI" id="CHEBI:30616"/>
    </ligand>
</feature>
<feature type="binding site" evidence="1">
    <location>
        <position position="135"/>
    </location>
    <ligand>
        <name>ATP</name>
        <dbReference type="ChEBI" id="CHEBI:30616"/>
    </ligand>
</feature>
<feature type="binding site" evidence="1">
    <location>
        <position position="192"/>
    </location>
    <ligand>
        <name>ATP</name>
        <dbReference type="ChEBI" id="CHEBI:30616"/>
    </ligand>
</feature>
<feature type="binding site" evidence="1">
    <location>
        <position position="199"/>
    </location>
    <ligand>
        <name>ATP</name>
        <dbReference type="ChEBI" id="CHEBI:30616"/>
    </ligand>
</feature>
<feature type="binding site" evidence="1">
    <location>
        <position position="271"/>
    </location>
    <ligand>
        <name>Mg(2+)</name>
        <dbReference type="ChEBI" id="CHEBI:18420"/>
    </ligand>
</feature>
<feature type="binding site" evidence="1">
    <location>
        <position position="280"/>
    </location>
    <ligand>
        <name>ATP</name>
        <dbReference type="ChEBI" id="CHEBI:30616"/>
    </ligand>
</feature>
<feature type="binding site" evidence="1">
    <location>
        <position position="280"/>
    </location>
    <ligand>
        <name>Mg(2+)</name>
        <dbReference type="ChEBI" id="CHEBI:18420"/>
    </ligand>
</feature>
<sequence>MLTFDNRFLRELPGDPETSNQLRQVYGACWSRVMPTSVSSPKLLAYSHEMLEALELSEEEIRSPAWVDALAGNGLMPGMEPYAACYGGHQFGHWAGQLGDGRAISLGEVVNRQGQRWELQLKGAGVTPYSRMADGRAVLRSSVREFLCSEAMHHLGIPTTRALSLVQTGDVVIRDMFYDGHPQAEKGAIVCRVSPSFIRFGNFEIFAMRDDKQTLQKLVDFTIDRDFPELRNYPEEERLAEWFAIICVRTARLIAQWMRVGFVHGVMNTDNMSILGLTIDYGPYGWVDNFDPGWTPNTTDAAGRRYCFGRQPDIARWNLERLAQALYTLKPEREIYDEGLMLYDQAYNNEWGAVLAAKFGFSAWRDEYEPLLNEVFGLMTQAEIDMTEFFRKLALVDAAQPDLGILQSAAYSPALWETFKPRFSDWLGQYAQATLADGRDPAERREAMNRVNPRYVLRNYLAQQAIDLADTGDTSMIEALMDVLRKPYDEQPGKERFAALRPDWARHKAGCSMLSCSS</sequence>
<comment type="function">
    <text evidence="1">Nucleotidyltransferase involved in the post-translational modification of proteins. It can catalyze the addition of adenosine monophosphate (AMP) or uridine monophosphate (UMP) to a protein, resulting in modifications known as AMPylation and UMPylation.</text>
</comment>
<comment type="catalytic activity">
    <reaction evidence="1">
        <text>L-seryl-[protein] + ATP = 3-O-(5'-adenylyl)-L-seryl-[protein] + diphosphate</text>
        <dbReference type="Rhea" id="RHEA:58120"/>
        <dbReference type="Rhea" id="RHEA-COMP:9863"/>
        <dbReference type="Rhea" id="RHEA-COMP:15073"/>
        <dbReference type="ChEBI" id="CHEBI:29999"/>
        <dbReference type="ChEBI" id="CHEBI:30616"/>
        <dbReference type="ChEBI" id="CHEBI:33019"/>
        <dbReference type="ChEBI" id="CHEBI:142516"/>
        <dbReference type="EC" id="2.7.7.108"/>
    </reaction>
</comment>
<comment type="catalytic activity">
    <reaction evidence="1">
        <text>L-threonyl-[protein] + ATP = 3-O-(5'-adenylyl)-L-threonyl-[protein] + diphosphate</text>
        <dbReference type="Rhea" id="RHEA:54292"/>
        <dbReference type="Rhea" id="RHEA-COMP:11060"/>
        <dbReference type="Rhea" id="RHEA-COMP:13847"/>
        <dbReference type="ChEBI" id="CHEBI:30013"/>
        <dbReference type="ChEBI" id="CHEBI:30616"/>
        <dbReference type="ChEBI" id="CHEBI:33019"/>
        <dbReference type="ChEBI" id="CHEBI:138113"/>
        <dbReference type="EC" id="2.7.7.108"/>
    </reaction>
</comment>
<comment type="catalytic activity">
    <reaction evidence="1">
        <text>L-tyrosyl-[protein] + ATP = O-(5'-adenylyl)-L-tyrosyl-[protein] + diphosphate</text>
        <dbReference type="Rhea" id="RHEA:54288"/>
        <dbReference type="Rhea" id="RHEA-COMP:10136"/>
        <dbReference type="Rhea" id="RHEA-COMP:13846"/>
        <dbReference type="ChEBI" id="CHEBI:30616"/>
        <dbReference type="ChEBI" id="CHEBI:33019"/>
        <dbReference type="ChEBI" id="CHEBI:46858"/>
        <dbReference type="ChEBI" id="CHEBI:83624"/>
        <dbReference type="EC" id="2.7.7.108"/>
    </reaction>
</comment>
<comment type="catalytic activity">
    <reaction evidence="1">
        <text>L-histidyl-[protein] + UTP = N(tele)-(5'-uridylyl)-L-histidyl-[protein] + diphosphate</text>
        <dbReference type="Rhea" id="RHEA:83891"/>
        <dbReference type="Rhea" id="RHEA-COMP:9745"/>
        <dbReference type="Rhea" id="RHEA-COMP:20239"/>
        <dbReference type="ChEBI" id="CHEBI:29979"/>
        <dbReference type="ChEBI" id="CHEBI:33019"/>
        <dbReference type="ChEBI" id="CHEBI:46398"/>
        <dbReference type="ChEBI" id="CHEBI:233474"/>
    </reaction>
</comment>
<comment type="catalytic activity">
    <reaction evidence="1">
        <text>L-seryl-[protein] + UTP = O-(5'-uridylyl)-L-seryl-[protein] + diphosphate</text>
        <dbReference type="Rhea" id="RHEA:64604"/>
        <dbReference type="Rhea" id="RHEA-COMP:9863"/>
        <dbReference type="Rhea" id="RHEA-COMP:16635"/>
        <dbReference type="ChEBI" id="CHEBI:29999"/>
        <dbReference type="ChEBI" id="CHEBI:33019"/>
        <dbReference type="ChEBI" id="CHEBI:46398"/>
        <dbReference type="ChEBI" id="CHEBI:156051"/>
    </reaction>
</comment>
<comment type="catalytic activity">
    <reaction evidence="1">
        <text>L-tyrosyl-[protein] + UTP = O-(5'-uridylyl)-L-tyrosyl-[protein] + diphosphate</text>
        <dbReference type="Rhea" id="RHEA:83887"/>
        <dbReference type="Rhea" id="RHEA-COMP:10136"/>
        <dbReference type="Rhea" id="RHEA-COMP:20238"/>
        <dbReference type="ChEBI" id="CHEBI:33019"/>
        <dbReference type="ChEBI" id="CHEBI:46398"/>
        <dbReference type="ChEBI" id="CHEBI:46858"/>
        <dbReference type="ChEBI" id="CHEBI:90602"/>
    </reaction>
</comment>
<comment type="cofactor">
    <cofactor evidence="1">
        <name>Mg(2+)</name>
        <dbReference type="ChEBI" id="CHEBI:18420"/>
    </cofactor>
    <cofactor evidence="1">
        <name>Mn(2+)</name>
        <dbReference type="ChEBI" id="CHEBI:29035"/>
    </cofactor>
</comment>
<comment type="similarity">
    <text evidence="1">Belongs to the SELO family.</text>
</comment>
<evidence type="ECO:0000255" key="1">
    <source>
        <dbReference type="HAMAP-Rule" id="MF_00692"/>
    </source>
</evidence>
<organism>
    <name type="scientific">Methylobacillus flagellatus (strain ATCC 51484 / DSM 6875 / VKM B-1610 / KT)</name>
    <dbReference type="NCBI Taxonomy" id="265072"/>
    <lineage>
        <taxon>Bacteria</taxon>
        <taxon>Pseudomonadati</taxon>
        <taxon>Pseudomonadota</taxon>
        <taxon>Betaproteobacteria</taxon>
        <taxon>Nitrosomonadales</taxon>
        <taxon>Methylophilaceae</taxon>
        <taxon>Methylobacillus</taxon>
    </lineage>
</organism>
<dbReference type="EC" id="2.7.7.-" evidence="1"/>
<dbReference type="EC" id="2.7.7.108" evidence="1"/>
<dbReference type="EMBL" id="CP000284">
    <property type="protein sequence ID" value="ABE50055.1"/>
    <property type="molecule type" value="Genomic_DNA"/>
</dbReference>
<dbReference type="RefSeq" id="WP_011480009.1">
    <property type="nucleotide sequence ID" value="NC_007947.1"/>
</dbReference>
<dbReference type="SMR" id="Q1H0D2"/>
<dbReference type="STRING" id="265072.Mfla_1788"/>
<dbReference type="KEGG" id="mfa:Mfla_1788"/>
<dbReference type="eggNOG" id="COG0397">
    <property type="taxonomic scope" value="Bacteria"/>
</dbReference>
<dbReference type="HOGENOM" id="CLU_010245_4_0_4"/>
<dbReference type="OrthoDB" id="9776281at2"/>
<dbReference type="Proteomes" id="UP000002440">
    <property type="component" value="Chromosome"/>
</dbReference>
<dbReference type="GO" id="GO:0070733">
    <property type="term" value="F:AMPylase activity"/>
    <property type="evidence" value="ECO:0007669"/>
    <property type="project" value="TreeGrafter"/>
</dbReference>
<dbReference type="GO" id="GO:0005524">
    <property type="term" value="F:ATP binding"/>
    <property type="evidence" value="ECO:0007669"/>
    <property type="project" value="UniProtKB-UniRule"/>
</dbReference>
<dbReference type="GO" id="GO:0000287">
    <property type="term" value="F:magnesium ion binding"/>
    <property type="evidence" value="ECO:0007669"/>
    <property type="project" value="UniProtKB-UniRule"/>
</dbReference>
<dbReference type="HAMAP" id="MF_00692">
    <property type="entry name" value="YdiU_SelO"/>
    <property type="match status" value="1"/>
</dbReference>
<dbReference type="InterPro" id="IPR003846">
    <property type="entry name" value="SelO"/>
</dbReference>
<dbReference type="NCBIfam" id="NF000658">
    <property type="entry name" value="PRK00029.1"/>
    <property type="match status" value="1"/>
</dbReference>
<dbReference type="PANTHER" id="PTHR32057">
    <property type="entry name" value="PROTEIN ADENYLYLTRANSFERASE SELO, MITOCHONDRIAL"/>
    <property type="match status" value="1"/>
</dbReference>
<dbReference type="PANTHER" id="PTHR32057:SF14">
    <property type="entry name" value="PROTEIN ADENYLYLTRANSFERASE SELO, MITOCHONDRIAL"/>
    <property type="match status" value="1"/>
</dbReference>
<dbReference type="Pfam" id="PF02696">
    <property type="entry name" value="SelO"/>
    <property type="match status" value="1"/>
</dbReference>
<proteinExistence type="inferred from homology"/>
<keyword id="KW-0067">ATP-binding</keyword>
<keyword id="KW-0460">Magnesium</keyword>
<keyword id="KW-0464">Manganese</keyword>
<keyword id="KW-0479">Metal-binding</keyword>
<keyword id="KW-0547">Nucleotide-binding</keyword>
<keyword id="KW-0548">Nucleotidyltransferase</keyword>
<keyword id="KW-1185">Reference proteome</keyword>
<keyword id="KW-0808">Transferase</keyword>
<protein>
    <recommendedName>
        <fullName evidence="1">Protein nucleotidyltransferase YdiU</fullName>
        <ecNumber evidence="1">2.7.7.-</ecNumber>
    </recommendedName>
    <alternativeName>
        <fullName evidence="1">Protein adenylyltransferase YdiU</fullName>
        <ecNumber evidence="1">2.7.7.108</ecNumber>
    </alternativeName>
    <alternativeName>
        <fullName evidence="1">Protein uridylyltransferase YdiU</fullName>
        <ecNumber evidence="1">2.7.7.-</ecNumber>
    </alternativeName>
</protein>
<accession>Q1H0D2</accession>
<reference key="1">
    <citation type="submission" date="2006-03" db="EMBL/GenBank/DDBJ databases">
        <title>Complete sequence of Methylobacillus flagellatus KT.</title>
        <authorList>
            <consortium name="US DOE Joint Genome Institute"/>
            <person name="Copeland A."/>
            <person name="Lucas S."/>
            <person name="Lapidus A."/>
            <person name="Barry K."/>
            <person name="Detter J.C."/>
            <person name="Glavina del Rio T."/>
            <person name="Hammon N."/>
            <person name="Israni S."/>
            <person name="Dalin E."/>
            <person name="Tice H."/>
            <person name="Pitluck S."/>
            <person name="Brettin T."/>
            <person name="Bruce D."/>
            <person name="Han C."/>
            <person name="Tapia R."/>
            <person name="Saunders E."/>
            <person name="Gilna P."/>
            <person name="Schmutz J."/>
            <person name="Larimer F."/>
            <person name="Land M."/>
            <person name="Kyrpides N."/>
            <person name="Anderson I."/>
            <person name="Richardson P."/>
        </authorList>
    </citation>
    <scope>NUCLEOTIDE SEQUENCE [LARGE SCALE GENOMIC DNA]</scope>
    <source>
        <strain>ATCC 51484 / DSM 6875 / VKM B-1610 / KT</strain>
    </source>
</reference>
<gene>
    <name evidence="1" type="primary">ydiU</name>
    <name evidence="1" type="synonym">selO</name>
    <name type="ordered locus">Mfla_1788</name>
</gene>
<name>SELO_METFK</name>